<accession>Q8DUI4</accession>
<name>TYSY_STRMU</name>
<reference key="1">
    <citation type="journal article" date="2002" name="Proc. Natl. Acad. Sci. U.S.A.">
        <title>Genome sequence of Streptococcus mutans UA159, a cariogenic dental pathogen.</title>
        <authorList>
            <person name="Ajdic D.J."/>
            <person name="McShan W.M."/>
            <person name="McLaughlin R.E."/>
            <person name="Savic G."/>
            <person name="Chang J."/>
            <person name="Carson M.B."/>
            <person name="Primeaux C."/>
            <person name="Tian R."/>
            <person name="Kenton S."/>
            <person name="Jia H.G."/>
            <person name="Lin S.P."/>
            <person name="Qian Y."/>
            <person name="Li S."/>
            <person name="Zhu H."/>
            <person name="Najar F.Z."/>
            <person name="Lai H."/>
            <person name="White J."/>
            <person name="Roe B.A."/>
            <person name="Ferretti J.J."/>
        </authorList>
    </citation>
    <scope>NUCLEOTIDE SEQUENCE [LARGE SCALE GENOMIC DNA]</scope>
    <source>
        <strain>ATCC 700610 / UA159</strain>
    </source>
</reference>
<keyword id="KW-0963">Cytoplasm</keyword>
<keyword id="KW-0489">Methyltransferase</keyword>
<keyword id="KW-0545">Nucleotide biosynthesis</keyword>
<keyword id="KW-1185">Reference proteome</keyword>
<keyword id="KW-0808">Transferase</keyword>
<organism>
    <name type="scientific">Streptococcus mutans serotype c (strain ATCC 700610 / UA159)</name>
    <dbReference type="NCBI Taxonomy" id="210007"/>
    <lineage>
        <taxon>Bacteria</taxon>
        <taxon>Bacillati</taxon>
        <taxon>Bacillota</taxon>
        <taxon>Bacilli</taxon>
        <taxon>Lactobacillales</taxon>
        <taxon>Streptococcaceae</taxon>
        <taxon>Streptococcus</taxon>
    </lineage>
</organism>
<gene>
    <name evidence="1" type="primary">thyA</name>
    <name type="ordered locus">SMU_944</name>
</gene>
<comment type="function">
    <text evidence="1">Catalyzes the reductive methylation of 2'-deoxyuridine-5'-monophosphate (dUMP) to 2'-deoxythymidine-5'-monophosphate (dTMP) while utilizing 5,10-methylenetetrahydrofolate (mTHF) as the methyl donor and reductant in the reaction, yielding dihydrofolate (DHF) as a by-product. This enzymatic reaction provides an intracellular de novo source of dTMP, an essential precursor for DNA biosynthesis.</text>
</comment>
<comment type="catalytic activity">
    <reaction evidence="1">
        <text>dUMP + (6R)-5,10-methylene-5,6,7,8-tetrahydrofolate = 7,8-dihydrofolate + dTMP</text>
        <dbReference type="Rhea" id="RHEA:12104"/>
        <dbReference type="ChEBI" id="CHEBI:15636"/>
        <dbReference type="ChEBI" id="CHEBI:57451"/>
        <dbReference type="ChEBI" id="CHEBI:63528"/>
        <dbReference type="ChEBI" id="CHEBI:246422"/>
        <dbReference type="EC" id="2.1.1.45"/>
    </reaction>
</comment>
<comment type="pathway">
    <text evidence="1">Pyrimidine metabolism; dTTP biosynthesis.</text>
</comment>
<comment type="subunit">
    <text evidence="1">Homodimer.</text>
</comment>
<comment type="subcellular location">
    <subcellularLocation>
        <location evidence="1">Cytoplasm</location>
    </subcellularLocation>
</comment>
<comment type="similarity">
    <text evidence="1">Belongs to the thymidylate synthase family. Bacterial-type ThyA subfamily.</text>
</comment>
<evidence type="ECO:0000255" key="1">
    <source>
        <dbReference type="HAMAP-Rule" id="MF_00008"/>
    </source>
</evidence>
<dbReference type="EC" id="2.1.1.45" evidence="1"/>
<dbReference type="EMBL" id="AE014133">
    <property type="protein sequence ID" value="AAN58649.1"/>
    <property type="molecule type" value="Genomic_DNA"/>
</dbReference>
<dbReference type="RefSeq" id="NP_721343.1">
    <property type="nucleotide sequence ID" value="NC_004350.2"/>
</dbReference>
<dbReference type="RefSeq" id="WP_002263663.1">
    <property type="nucleotide sequence ID" value="NC_004350.2"/>
</dbReference>
<dbReference type="SMR" id="Q8DUI4"/>
<dbReference type="STRING" id="210007.SMU_944"/>
<dbReference type="KEGG" id="smu:SMU_944"/>
<dbReference type="PATRIC" id="fig|210007.7.peg.842"/>
<dbReference type="eggNOG" id="COG0207">
    <property type="taxonomic scope" value="Bacteria"/>
</dbReference>
<dbReference type="HOGENOM" id="CLU_021669_0_0_9"/>
<dbReference type="OrthoDB" id="9774633at2"/>
<dbReference type="PhylomeDB" id="Q8DUI4"/>
<dbReference type="UniPathway" id="UPA00575"/>
<dbReference type="Proteomes" id="UP000002512">
    <property type="component" value="Chromosome"/>
</dbReference>
<dbReference type="GO" id="GO:0005829">
    <property type="term" value="C:cytosol"/>
    <property type="evidence" value="ECO:0007669"/>
    <property type="project" value="TreeGrafter"/>
</dbReference>
<dbReference type="GO" id="GO:0004799">
    <property type="term" value="F:thymidylate synthase activity"/>
    <property type="evidence" value="ECO:0007669"/>
    <property type="project" value="UniProtKB-UniRule"/>
</dbReference>
<dbReference type="GO" id="GO:0006231">
    <property type="term" value="P:dTMP biosynthetic process"/>
    <property type="evidence" value="ECO:0007669"/>
    <property type="project" value="UniProtKB-UniRule"/>
</dbReference>
<dbReference type="GO" id="GO:0006235">
    <property type="term" value="P:dTTP biosynthetic process"/>
    <property type="evidence" value="ECO:0007669"/>
    <property type="project" value="UniProtKB-UniRule"/>
</dbReference>
<dbReference type="GO" id="GO:0032259">
    <property type="term" value="P:methylation"/>
    <property type="evidence" value="ECO:0007669"/>
    <property type="project" value="UniProtKB-KW"/>
</dbReference>
<dbReference type="CDD" id="cd00351">
    <property type="entry name" value="TS_Pyrimidine_HMase"/>
    <property type="match status" value="1"/>
</dbReference>
<dbReference type="Gene3D" id="3.30.572.10">
    <property type="entry name" value="Thymidylate synthase/dCMP hydroxymethylase domain"/>
    <property type="match status" value="1"/>
</dbReference>
<dbReference type="HAMAP" id="MF_00008">
    <property type="entry name" value="Thymidy_synth_bact"/>
    <property type="match status" value="1"/>
</dbReference>
<dbReference type="InterPro" id="IPR045097">
    <property type="entry name" value="Thymidate_synth/dCMP_Mease"/>
</dbReference>
<dbReference type="InterPro" id="IPR023451">
    <property type="entry name" value="Thymidate_synth/dCMP_Mease_dom"/>
</dbReference>
<dbReference type="InterPro" id="IPR036926">
    <property type="entry name" value="Thymidate_synth/dCMP_Mease_sf"/>
</dbReference>
<dbReference type="InterPro" id="IPR000398">
    <property type="entry name" value="Thymidylate_synthase"/>
</dbReference>
<dbReference type="InterPro" id="IPR020940">
    <property type="entry name" value="Thymidylate_synthase_AS"/>
</dbReference>
<dbReference type="NCBIfam" id="NF002495">
    <property type="entry name" value="PRK01827.1-1"/>
    <property type="match status" value="1"/>
</dbReference>
<dbReference type="PANTHER" id="PTHR11548">
    <property type="entry name" value="THYMIDYLATE SYNTHASE 1"/>
    <property type="match status" value="1"/>
</dbReference>
<dbReference type="PANTHER" id="PTHR11548:SF1">
    <property type="entry name" value="THYMIDYLATE SYNTHASE 1"/>
    <property type="match status" value="1"/>
</dbReference>
<dbReference type="Pfam" id="PF00303">
    <property type="entry name" value="Thymidylat_synt"/>
    <property type="match status" value="1"/>
</dbReference>
<dbReference type="PRINTS" id="PR00108">
    <property type="entry name" value="THYMDSNTHASE"/>
</dbReference>
<dbReference type="SUPFAM" id="SSF55831">
    <property type="entry name" value="Thymidylate synthase/dCMP hydroxymethylase"/>
    <property type="match status" value="1"/>
</dbReference>
<dbReference type="PROSITE" id="PS00091">
    <property type="entry name" value="THYMIDYLATE_SYNTHASE"/>
    <property type="match status" value="1"/>
</dbReference>
<proteinExistence type="inferred from homology"/>
<sequence length="279" mass="32831">MSKADFIFKKNIKKILTDGVWSEQARPKYKNGKTANSKYITGAFAEYDLAKGEFPITTLRPIAIKSAIKEVFWIYQDQTNELAILNDKYGVRYWNDWEVKQTGTIGERYGAIVKKHDIMNKILKQLEENPWNRRNVISLWDYEAFEKTEGLLPCAFQIMFDVRRVKGEIYLDATLTQRSNDMLVAHHINAMQYVALQMMIAKHFGWKVGKFFYFVNNLHIYDNQFEQAEELLRREPVVCQPHLVLNVPNKTNFFDIKPEDFELLDYEPVKPQLKFDLAI</sequence>
<feature type="chain" id="PRO_0000141029" description="Thymidylate synthase">
    <location>
        <begin position="1"/>
        <end position="279"/>
    </location>
</feature>
<feature type="active site" description="Nucleophile" evidence="1">
    <location>
        <position position="154"/>
    </location>
</feature>
<feature type="binding site" evidence="1">
    <location>
        <begin position="133"/>
        <end position="134"/>
    </location>
    <ligand>
        <name>dUMP</name>
        <dbReference type="ChEBI" id="CHEBI:246422"/>
        <note>ligand shared between dimeric partners</note>
    </ligand>
</feature>
<feature type="binding site" description="in other chain" evidence="1">
    <location>
        <begin position="178"/>
        <end position="181"/>
    </location>
    <ligand>
        <name>dUMP</name>
        <dbReference type="ChEBI" id="CHEBI:246422"/>
        <note>ligand shared between dimeric partners</note>
    </ligand>
</feature>
<feature type="binding site" evidence="1">
    <location>
        <position position="181"/>
    </location>
    <ligand>
        <name>(6R)-5,10-methylene-5,6,7,8-tetrahydrofolate</name>
        <dbReference type="ChEBI" id="CHEBI:15636"/>
    </ligand>
</feature>
<feature type="binding site" description="in other chain" evidence="1">
    <location>
        <position position="189"/>
    </location>
    <ligand>
        <name>dUMP</name>
        <dbReference type="ChEBI" id="CHEBI:246422"/>
        <note>ligand shared between dimeric partners</note>
    </ligand>
</feature>
<feature type="binding site" description="in other chain" evidence="1">
    <location>
        <begin position="219"/>
        <end position="221"/>
    </location>
    <ligand>
        <name>dUMP</name>
        <dbReference type="ChEBI" id="CHEBI:246422"/>
        <note>ligand shared between dimeric partners</note>
    </ligand>
</feature>
<feature type="binding site" evidence="1">
    <location>
        <position position="278"/>
    </location>
    <ligand>
        <name>(6R)-5,10-methylene-5,6,7,8-tetrahydrofolate</name>
        <dbReference type="ChEBI" id="CHEBI:15636"/>
    </ligand>
</feature>
<protein>
    <recommendedName>
        <fullName evidence="1">Thymidylate synthase</fullName>
        <shortName evidence="1">TS</shortName>
        <shortName evidence="1">TSase</shortName>
        <ecNumber evidence="1">2.1.1.45</ecNumber>
    </recommendedName>
</protein>